<keyword id="KW-0249">Electron transport</keyword>
<keyword id="KW-0349">Heme</keyword>
<keyword id="KW-0408">Iron</keyword>
<keyword id="KW-0472">Membrane</keyword>
<keyword id="KW-0479">Metal-binding</keyword>
<keyword id="KW-0496">Mitochondrion</keyword>
<keyword id="KW-0999">Mitochondrion inner membrane</keyword>
<keyword id="KW-0679">Respiratory chain</keyword>
<keyword id="KW-0812">Transmembrane</keyword>
<keyword id="KW-1133">Transmembrane helix</keyword>
<keyword id="KW-0813">Transport</keyword>
<keyword id="KW-0830">Ubiquinone</keyword>
<comment type="function">
    <text evidence="2">Component of the ubiquinol-cytochrome c reductase complex (complex III or cytochrome b-c1 complex) that is part of the mitochondrial respiratory chain. The b-c1 complex mediates electron transfer from ubiquinol to cytochrome c. Contributes to the generation of a proton gradient across the mitochondrial membrane that is then used for ATP synthesis.</text>
</comment>
<comment type="cofactor">
    <cofactor evidence="2">
        <name>heme b</name>
        <dbReference type="ChEBI" id="CHEBI:60344"/>
    </cofactor>
    <text evidence="2">Binds 2 heme b groups non-covalently.</text>
</comment>
<comment type="subunit">
    <text evidence="2">The cytochrome bc1 complex contains 11 subunits: 3 respiratory subunits (MT-CYB, CYC1 and UQCRFS1), 2 core proteins (UQCRC1 and UQCRC2) and 6 low-molecular weight proteins (UQCRH/QCR6, UQCRB/QCR7, UQCRQ/QCR8, UQCR10/QCR9, UQCR11/QCR10 and a cleavage product of UQCRFS1). This cytochrome bc1 complex then forms a dimer.</text>
</comment>
<comment type="subcellular location">
    <subcellularLocation>
        <location evidence="2">Mitochondrion inner membrane</location>
        <topology evidence="2">Multi-pass membrane protein</topology>
    </subcellularLocation>
</comment>
<comment type="miscellaneous">
    <text evidence="1">Heme 1 (or BL or b562) is low-potential and absorbs at about 562 nm, and heme 2 (or BH or b566) is high-potential and absorbs at about 566 nm.</text>
</comment>
<comment type="similarity">
    <text evidence="3 4">Belongs to the cytochrome b family.</text>
</comment>
<comment type="caution">
    <text evidence="2">The full-length protein contains only eight transmembrane helices, not nine as predicted by bioinformatics tools.</text>
</comment>
<geneLocation type="mitochondrion"/>
<proteinExistence type="inferred from homology"/>
<feature type="chain" id="PRO_0000061252" description="Cytochrome b">
    <location>
        <begin position="1"/>
        <end position="379"/>
    </location>
</feature>
<feature type="transmembrane region" description="Helical" evidence="2">
    <location>
        <begin position="33"/>
        <end position="53"/>
    </location>
</feature>
<feature type="transmembrane region" description="Helical" evidence="2">
    <location>
        <begin position="77"/>
        <end position="98"/>
    </location>
</feature>
<feature type="transmembrane region" description="Helical" evidence="2">
    <location>
        <begin position="113"/>
        <end position="133"/>
    </location>
</feature>
<feature type="transmembrane region" description="Helical" evidence="2">
    <location>
        <begin position="178"/>
        <end position="198"/>
    </location>
</feature>
<feature type="transmembrane region" description="Helical" evidence="2">
    <location>
        <begin position="226"/>
        <end position="246"/>
    </location>
</feature>
<feature type="transmembrane region" description="Helical" evidence="2">
    <location>
        <begin position="288"/>
        <end position="308"/>
    </location>
</feature>
<feature type="transmembrane region" description="Helical" evidence="2">
    <location>
        <begin position="320"/>
        <end position="340"/>
    </location>
</feature>
<feature type="transmembrane region" description="Helical" evidence="2">
    <location>
        <begin position="347"/>
        <end position="367"/>
    </location>
</feature>
<feature type="binding site" description="axial binding residue" evidence="2">
    <location>
        <position position="83"/>
    </location>
    <ligand>
        <name>heme b</name>
        <dbReference type="ChEBI" id="CHEBI:60344"/>
        <label>b562</label>
    </ligand>
    <ligandPart>
        <name>Fe</name>
        <dbReference type="ChEBI" id="CHEBI:18248"/>
    </ligandPart>
</feature>
<feature type="binding site" description="axial binding residue" evidence="2">
    <location>
        <position position="97"/>
    </location>
    <ligand>
        <name>heme b</name>
        <dbReference type="ChEBI" id="CHEBI:60344"/>
        <label>b566</label>
    </ligand>
    <ligandPart>
        <name>Fe</name>
        <dbReference type="ChEBI" id="CHEBI:18248"/>
    </ligandPart>
</feature>
<feature type="binding site" description="axial binding residue" evidence="2">
    <location>
        <position position="182"/>
    </location>
    <ligand>
        <name>heme b</name>
        <dbReference type="ChEBI" id="CHEBI:60344"/>
        <label>b562</label>
    </ligand>
    <ligandPart>
        <name>Fe</name>
        <dbReference type="ChEBI" id="CHEBI:18248"/>
    </ligandPart>
</feature>
<feature type="binding site" description="axial binding residue" evidence="2">
    <location>
        <position position="196"/>
    </location>
    <ligand>
        <name>heme b</name>
        <dbReference type="ChEBI" id="CHEBI:60344"/>
        <label>b566</label>
    </ligand>
    <ligandPart>
        <name>Fe</name>
        <dbReference type="ChEBI" id="CHEBI:18248"/>
    </ligandPart>
</feature>
<feature type="binding site" evidence="2">
    <location>
        <position position="201"/>
    </location>
    <ligand>
        <name>a ubiquinone</name>
        <dbReference type="ChEBI" id="CHEBI:16389"/>
    </ligand>
</feature>
<feature type="sequence variant" description="In strain: Isolate 4183.">
    <original>T</original>
    <variation>A</variation>
    <location>
        <position position="122"/>
    </location>
</feature>
<dbReference type="EMBL" id="AY485684">
    <property type="protein sequence ID" value="AAS57898.1"/>
    <property type="molecule type" value="Genomic_DNA"/>
</dbReference>
<dbReference type="EMBL" id="AY485685">
    <property type="protein sequence ID" value="AAS57899.1"/>
    <property type="molecule type" value="Genomic_DNA"/>
</dbReference>
<dbReference type="SMR" id="Q64JA0"/>
<dbReference type="GO" id="GO:0005743">
    <property type="term" value="C:mitochondrial inner membrane"/>
    <property type="evidence" value="ECO:0007669"/>
    <property type="project" value="UniProtKB-SubCell"/>
</dbReference>
<dbReference type="GO" id="GO:0045275">
    <property type="term" value="C:respiratory chain complex III"/>
    <property type="evidence" value="ECO:0007669"/>
    <property type="project" value="InterPro"/>
</dbReference>
<dbReference type="GO" id="GO:0046872">
    <property type="term" value="F:metal ion binding"/>
    <property type="evidence" value="ECO:0007669"/>
    <property type="project" value="UniProtKB-KW"/>
</dbReference>
<dbReference type="GO" id="GO:0008121">
    <property type="term" value="F:ubiquinol-cytochrome-c reductase activity"/>
    <property type="evidence" value="ECO:0007669"/>
    <property type="project" value="InterPro"/>
</dbReference>
<dbReference type="GO" id="GO:0006122">
    <property type="term" value="P:mitochondrial electron transport, ubiquinol to cytochrome c"/>
    <property type="evidence" value="ECO:0007669"/>
    <property type="project" value="TreeGrafter"/>
</dbReference>
<dbReference type="CDD" id="cd00290">
    <property type="entry name" value="cytochrome_b_C"/>
    <property type="match status" value="1"/>
</dbReference>
<dbReference type="CDD" id="cd00284">
    <property type="entry name" value="Cytochrome_b_N"/>
    <property type="match status" value="1"/>
</dbReference>
<dbReference type="FunFam" id="1.20.810.10:FF:000002">
    <property type="entry name" value="Cytochrome b"/>
    <property type="match status" value="1"/>
</dbReference>
<dbReference type="Gene3D" id="1.20.810.10">
    <property type="entry name" value="Cytochrome Bc1 Complex, Chain C"/>
    <property type="match status" value="1"/>
</dbReference>
<dbReference type="InterPro" id="IPR005798">
    <property type="entry name" value="Cyt_b/b6_C"/>
</dbReference>
<dbReference type="InterPro" id="IPR036150">
    <property type="entry name" value="Cyt_b/b6_C_sf"/>
</dbReference>
<dbReference type="InterPro" id="IPR005797">
    <property type="entry name" value="Cyt_b/b6_N"/>
</dbReference>
<dbReference type="InterPro" id="IPR027387">
    <property type="entry name" value="Cytb/b6-like_sf"/>
</dbReference>
<dbReference type="InterPro" id="IPR030689">
    <property type="entry name" value="Cytochrome_b"/>
</dbReference>
<dbReference type="InterPro" id="IPR048260">
    <property type="entry name" value="Cytochrome_b_C_euk/bac"/>
</dbReference>
<dbReference type="InterPro" id="IPR048259">
    <property type="entry name" value="Cytochrome_b_N_euk/bac"/>
</dbReference>
<dbReference type="InterPro" id="IPR016174">
    <property type="entry name" value="Di-haem_cyt_TM"/>
</dbReference>
<dbReference type="PANTHER" id="PTHR19271">
    <property type="entry name" value="CYTOCHROME B"/>
    <property type="match status" value="1"/>
</dbReference>
<dbReference type="PANTHER" id="PTHR19271:SF16">
    <property type="entry name" value="CYTOCHROME B"/>
    <property type="match status" value="1"/>
</dbReference>
<dbReference type="Pfam" id="PF00032">
    <property type="entry name" value="Cytochrom_B_C"/>
    <property type="match status" value="1"/>
</dbReference>
<dbReference type="Pfam" id="PF00033">
    <property type="entry name" value="Cytochrome_B"/>
    <property type="match status" value="1"/>
</dbReference>
<dbReference type="PIRSF" id="PIRSF038885">
    <property type="entry name" value="COB"/>
    <property type="match status" value="1"/>
</dbReference>
<dbReference type="SUPFAM" id="SSF81648">
    <property type="entry name" value="a domain/subunit of cytochrome bc1 complex (Ubiquinol-cytochrome c reductase)"/>
    <property type="match status" value="1"/>
</dbReference>
<dbReference type="SUPFAM" id="SSF81342">
    <property type="entry name" value="Transmembrane di-heme cytochromes"/>
    <property type="match status" value="1"/>
</dbReference>
<dbReference type="PROSITE" id="PS51003">
    <property type="entry name" value="CYTB_CTER"/>
    <property type="match status" value="1"/>
</dbReference>
<dbReference type="PROSITE" id="PS51002">
    <property type="entry name" value="CYTB_NTER"/>
    <property type="match status" value="1"/>
</dbReference>
<sequence>MTNIRKSHPLIKIINNSFIDLPAPSNISSWWNFGSLLGICLGLQIITGLFLAMHYTSDTATAFNSVTHICRDVNYGWILRYLHANGASMFFICLYLHVGRGLYYGSYIYSETWNIGIILLFTVMATAFMGYVLPWGQMSFWGATVITNLLSAIPYIGTELVQWIWGGFSVDKATLTRFFAFHFLLPFIISAMVMVHLLFLHETGSNNPTGIPSNMDMIPFHPYYTIKDILGLLIMLTVLLALVLFSPDLLGDPDNYIPANPLNTPPHIKPEWYFLFAYAILRSIPNKLGGVLALVLSILILAIIPLLHTSKQRSMTFRPMSQCLFWLLTANLLTLTWIGGQPVEQPYIIIGQLASILYFTTILILLPLFSTLENHLLKW</sequence>
<gene>
    <name type="primary">MT-CYB</name>
    <name type="synonym">COB</name>
    <name type="synonym">CYTB</name>
    <name type="synonym">MTCYB</name>
</gene>
<organism>
    <name type="scientific">Cistugo seabrae</name>
    <name type="common">Angolan wing-gland bat</name>
    <name type="synonym">Myotis seabrai</name>
    <dbReference type="NCBI Taxonomy" id="712048"/>
    <lineage>
        <taxon>Eukaryota</taxon>
        <taxon>Metazoa</taxon>
        <taxon>Chordata</taxon>
        <taxon>Craniata</taxon>
        <taxon>Vertebrata</taxon>
        <taxon>Euteleostomi</taxon>
        <taxon>Mammalia</taxon>
        <taxon>Eutheria</taxon>
        <taxon>Laurasiatheria</taxon>
        <taxon>Chiroptera</taxon>
        <taxon>Yangochiroptera</taxon>
        <taxon>Cistugidae</taxon>
        <taxon>Cistugo</taxon>
    </lineage>
</organism>
<evidence type="ECO:0000250" key="1"/>
<evidence type="ECO:0000250" key="2">
    <source>
        <dbReference type="UniProtKB" id="P00157"/>
    </source>
</evidence>
<evidence type="ECO:0000255" key="3">
    <source>
        <dbReference type="PROSITE-ProRule" id="PRU00967"/>
    </source>
</evidence>
<evidence type="ECO:0000255" key="4">
    <source>
        <dbReference type="PROSITE-ProRule" id="PRU00968"/>
    </source>
</evidence>
<name>CYB_CISSE</name>
<protein>
    <recommendedName>
        <fullName>Cytochrome b</fullName>
    </recommendedName>
    <alternativeName>
        <fullName>Complex III subunit 3</fullName>
    </alternativeName>
    <alternativeName>
        <fullName>Complex III subunit III</fullName>
    </alternativeName>
    <alternativeName>
        <fullName>Cytochrome b-c1 complex subunit 3</fullName>
    </alternativeName>
    <alternativeName>
        <fullName>Ubiquinol-cytochrome-c reductase complex cytochrome b subunit</fullName>
    </alternativeName>
</protein>
<reference key="1">
    <citation type="journal article" date="2004" name="Mol. Phylogenet. Evol.">
        <title>Molecular phylogenetics, karyotypic diversity, and partition of the genus Myotis (Chiroptera: Vespertilionidae).</title>
        <authorList>
            <person name="Bickham J.W."/>
            <person name="Patton J.C."/>
            <person name="Schlitter D.A."/>
            <person name="Rautenbach I.L."/>
            <person name="Honeycutt R.L."/>
        </authorList>
    </citation>
    <scope>NUCLEOTIDE SEQUENCE [GENOMIC DNA]</scope>
    <source>
        <strain>Isolate 4183</strain>
        <strain>Isolate SP4121</strain>
    </source>
</reference>
<accession>Q64JA0</accession>
<accession>Q64J99</accession>